<organism>
    <name type="scientific">Rhodopseudomonas palustris (strain ATCC BAA-98 / CGA009)</name>
    <dbReference type="NCBI Taxonomy" id="258594"/>
    <lineage>
        <taxon>Bacteria</taxon>
        <taxon>Pseudomonadati</taxon>
        <taxon>Pseudomonadota</taxon>
        <taxon>Alphaproteobacteria</taxon>
        <taxon>Hyphomicrobiales</taxon>
        <taxon>Nitrobacteraceae</taxon>
        <taxon>Rhodopseudomonas</taxon>
    </lineage>
</organism>
<keyword id="KW-0028">Amino-acid biosynthesis</keyword>
<keyword id="KW-0057">Aromatic amino acid biosynthesis</keyword>
<keyword id="KW-0963">Cytoplasm</keyword>
<keyword id="KW-0808">Transferase</keyword>
<feature type="chain" id="PRO_1000058609" description="3-phosphoshikimate 1-carboxyvinyltransferase">
    <location>
        <begin position="1"/>
        <end position="445"/>
    </location>
</feature>
<feature type="region of interest" description="Disordered" evidence="2">
    <location>
        <begin position="1"/>
        <end position="25"/>
    </location>
</feature>
<feature type="active site" description="Proton acceptor" evidence="1">
    <location>
        <position position="328"/>
    </location>
</feature>
<feature type="binding site" evidence="1">
    <location>
        <position position="28"/>
    </location>
    <ligand>
        <name>3-phosphoshikimate</name>
        <dbReference type="ChEBI" id="CHEBI:145989"/>
    </ligand>
</feature>
<feature type="binding site" evidence="1">
    <location>
        <position position="28"/>
    </location>
    <ligand>
        <name>phosphoenolpyruvate</name>
        <dbReference type="ChEBI" id="CHEBI:58702"/>
    </ligand>
</feature>
<feature type="binding site" evidence="1">
    <location>
        <position position="29"/>
    </location>
    <ligand>
        <name>3-phosphoshikimate</name>
        <dbReference type="ChEBI" id="CHEBI:145989"/>
    </ligand>
</feature>
<feature type="binding site" evidence="1">
    <location>
        <position position="33"/>
    </location>
    <ligand>
        <name>3-phosphoshikimate</name>
        <dbReference type="ChEBI" id="CHEBI:145989"/>
    </ligand>
</feature>
<feature type="binding site" evidence="1">
    <location>
        <position position="101"/>
    </location>
    <ligand>
        <name>phosphoenolpyruvate</name>
        <dbReference type="ChEBI" id="CHEBI:58702"/>
    </ligand>
</feature>
<feature type="binding site" evidence="1">
    <location>
        <position position="129"/>
    </location>
    <ligand>
        <name>phosphoenolpyruvate</name>
        <dbReference type="ChEBI" id="CHEBI:58702"/>
    </ligand>
</feature>
<feature type="binding site" evidence="1">
    <location>
        <position position="175"/>
    </location>
    <ligand>
        <name>3-phosphoshikimate</name>
        <dbReference type="ChEBI" id="CHEBI:145989"/>
    </ligand>
</feature>
<feature type="binding site" evidence="1">
    <location>
        <position position="177"/>
    </location>
    <ligand>
        <name>3-phosphoshikimate</name>
        <dbReference type="ChEBI" id="CHEBI:145989"/>
    </ligand>
</feature>
<feature type="binding site" evidence="1">
    <location>
        <position position="177"/>
    </location>
    <ligand>
        <name>phosphoenolpyruvate</name>
        <dbReference type="ChEBI" id="CHEBI:58702"/>
    </ligand>
</feature>
<feature type="binding site" evidence="1">
    <location>
        <position position="328"/>
    </location>
    <ligand>
        <name>3-phosphoshikimate</name>
        <dbReference type="ChEBI" id="CHEBI:145989"/>
    </ligand>
</feature>
<feature type="binding site" evidence="1">
    <location>
        <position position="355"/>
    </location>
    <ligand>
        <name>3-phosphoshikimate</name>
        <dbReference type="ChEBI" id="CHEBI:145989"/>
    </ligand>
</feature>
<feature type="binding site" evidence="1">
    <location>
        <position position="359"/>
    </location>
    <ligand>
        <name>phosphoenolpyruvate</name>
        <dbReference type="ChEBI" id="CHEBI:58702"/>
    </ligand>
</feature>
<feature type="binding site" evidence="1">
    <location>
        <position position="402"/>
    </location>
    <ligand>
        <name>phosphoenolpyruvate</name>
        <dbReference type="ChEBI" id="CHEBI:58702"/>
    </ligand>
</feature>
<comment type="function">
    <text evidence="1">Catalyzes the transfer of the enolpyruvyl moiety of phosphoenolpyruvate (PEP) to the 5-hydroxyl of shikimate-3-phosphate (S3P) to produce enolpyruvyl shikimate-3-phosphate and inorganic phosphate.</text>
</comment>
<comment type="catalytic activity">
    <reaction evidence="1">
        <text>3-phosphoshikimate + phosphoenolpyruvate = 5-O-(1-carboxyvinyl)-3-phosphoshikimate + phosphate</text>
        <dbReference type="Rhea" id="RHEA:21256"/>
        <dbReference type="ChEBI" id="CHEBI:43474"/>
        <dbReference type="ChEBI" id="CHEBI:57701"/>
        <dbReference type="ChEBI" id="CHEBI:58702"/>
        <dbReference type="ChEBI" id="CHEBI:145989"/>
        <dbReference type="EC" id="2.5.1.19"/>
    </reaction>
    <physiologicalReaction direction="left-to-right" evidence="1">
        <dbReference type="Rhea" id="RHEA:21257"/>
    </physiologicalReaction>
</comment>
<comment type="pathway">
    <text evidence="1">Metabolic intermediate biosynthesis; chorismate biosynthesis; chorismate from D-erythrose 4-phosphate and phosphoenolpyruvate: step 6/7.</text>
</comment>
<comment type="subunit">
    <text evidence="1">Monomer.</text>
</comment>
<comment type="subcellular location">
    <subcellularLocation>
        <location evidence="1">Cytoplasm</location>
    </subcellularLocation>
</comment>
<comment type="similarity">
    <text evidence="1">Belongs to the EPSP synthase family.</text>
</comment>
<proteinExistence type="inferred from homology"/>
<sequence length="445" mass="46372">MTDSNQPMPLQARKSGALHGTARVPGDKSISHRALILGALAVGETRISGLLEGEDVINTAKAMRALGAKVERTGDCEWRVHGVGVAGFATPEAPLDFGNSGTGCRLAMGAVAGSPIVATFDGDASLRSRPMRRIVDPLELMGAKVVSSSEGGRLPLALQGARDPLPILYRTPVPSAQIKSAVLLAGLSAPGITTVIEAEASRDHTELMLQHFGATIVTEAEGAHGRKISLTGQPELRGAPVVVPADPSSAAFPMVAALVVPGSDIELTDVMTNPLRTGLITTLREMGASIEDSDVRGDAGEPMARFRVRGSKLKGVEVPPERAPSMIDEYLVLAVAAAFAEGTTVMRGLHELRVKESDRLEATAAMLRVNGVAVEIAGDDLIVEGKGHVPGGGVVATHMDHRIAMSALAMGLASDKPVTVDDTAFIATSFPDFVPMMQRLGAEFG</sequence>
<evidence type="ECO:0000255" key="1">
    <source>
        <dbReference type="HAMAP-Rule" id="MF_00210"/>
    </source>
</evidence>
<evidence type="ECO:0000256" key="2">
    <source>
        <dbReference type="SAM" id="MobiDB-lite"/>
    </source>
</evidence>
<reference key="1">
    <citation type="journal article" date="2004" name="Nat. Biotechnol.">
        <title>Complete genome sequence of the metabolically versatile photosynthetic bacterium Rhodopseudomonas palustris.</title>
        <authorList>
            <person name="Larimer F.W."/>
            <person name="Chain P."/>
            <person name="Hauser L."/>
            <person name="Lamerdin J.E."/>
            <person name="Malfatti S."/>
            <person name="Do L."/>
            <person name="Land M.L."/>
            <person name="Pelletier D.A."/>
            <person name="Beatty J.T."/>
            <person name="Lang A.S."/>
            <person name="Tabita F.R."/>
            <person name="Gibson J.L."/>
            <person name="Hanson T.E."/>
            <person name="Bobst C."/>
            <person name="Torres y Torres J.L."/>
            <person name="Peres C."/>
            <person name="Harrison F.H."/>
            <person name="Gibson J."/>
            <person name="Harwood C.S."/>
        </authorList>
    </citation>
    <scope>NUCLEOTIDE SEQUENCE [LARGE SCALE GENOMIC DNA]</scope>
    <source>
        <strain>ATCC BAA-98 / CGA009</strain>
    </source>
</reference>
<accession>Q6NDP4</accession>
<protein>
    <recommendedName>
        <fullName evidence="1">3-phosphoshikimate 1-carboxyvinyltransferase</fullName>
        <ecNumber evidence="1">2.5.1.19</ecNumber>
    </recommendedName>
    <alternativeName>
        <fullName evidence="1">5-enolpyruvylshikimate-3-phosphate synthase</fullName>
        <shortName evidence="1">EPSP synthase</shortName>
        <shortName evidence="1">EPSPS</shortName>
    </alternativeName>
</protein>
<name>AROA_RHOPA</name>
<dbReference type="EC" id="2.5.1.19" evidence="1"/>
<dbReference type="EMBL" id="BX572593">
    <property type="protein sequence ID" value="CAE25505.1"/>
    <property type="molecule type" value="Genomic_DNA"/>
</dbReference>
<dbReference type="RefSeq" id="WP_011155632.1">
    <property type="nucleotide sequence ID" value="NZ_CP116810.1"/>
</dbReference>
<dbReference type="SMR" id="Q6NDP4"/>
<dbReference type="STRING" id="258594.RPA0061"/>
<dbReference type="GeneID" id="66891062"/>
<dbReference type="eggNOG" id="COG0128">
    <property type="taxonomic scope" value="Bacteria"/>
</dbReference>
<dbReference type="HOGENOM" id="CLU_024321_0_1_5"/>
<dbReference type="PhylomeDB" id="Q6NDP4"/>
<dbReference type="UniPathway" id="UPA00053">
    <property type="reaction ID" value="UER00089"/>
</dbReference>
<dbReference type="GO" id="GO:0005737">
    <property type="term" value="C:cytoplasm"/>
    <property type="evidence" value="ECO:0007669"/>
    <property type="project" value="UniProtKB-SubCell"/>
</dbReference>
<dbReference type="GO" id="GO:0003866">
    <property type="term" value="F:3-phosphoshikimate 1-carboxyvinyltransferase activity"/>
    <property type="evidence" value="ECO:0007669"/>
    <property type="project" value="UniProtKB-UniRule"/>
</dbReference>
<dbReference type="GO" id="GO:0008652">
    <property type="term" value="P:amino acid biosynthetic process"/>
    <property type="evidence" value="ECO:0007669"/>
    <property type="project" value="UniProtKB-KW"/>
</dbReference>
<dbReference type="GO" id="GO:0009073">
    <property type="term" value="P:aromatic amino acid family biosynthetic process"/>
    <property type="evidence" value="ECO:0007669"/>
    <property type="project" value="UniProtKB-KW"/>
</dbReference>
<dbReference type="GO" id="GO:0009423">
    <property type="term" value="P:chorismate biosynthetic process"/>
    <property type="evidence" value="ECO:0007669"/>
    <property type="project" value="UniProtKB-UniRule"/>
</dbReference>
<dbReference type="CDD" id="cd01556">
    <property type="entry name" value="EPSP_synthase"/>
    <property type="match status" value="1"/>
</dbReference>
<dbReference type="FunFam" id="3.65.10.10:FF:000005">
    <property type="entry name" value="3-phosphoshikimate 1-carboxyvinyltransferase"/>
    <property type="match status" value="1"/>
</dbReference>
<dbReference type="FunFam" id="3.65.10.10:FF:000006">
    <property type="entry name" value="3-phosphoshikimate 1-carboxyvinyltransferase"/>
    <property type="match status" value="1"/>
</dbReference>
<dbReference type="Gene3D" id="3.65.10.10">
    <property type="entry name" value="Enolpyruvate transferase domain"/>
    <property type="match status" value="2"/>
</dbReference>
<dbReference type="HAMAP" id="MF_00210">
    <property type="entry name" value="EPSP_synth"/>
    <property type="match status" value="1"/>
</dbReference>
<dbReference type="InterPro" id="IPR001986">
    <property type="entry name" value="Enolpyruvate_Tfrase_dom"/>
</dbReference>
<dbReference type="InterPro" id="IPR036968">
    <property type="entry name" value="Enolpyruvate_Tfrase_sf"/>
</dbReference>
<dbReference type="InterPro" id="IPR006264">
    <property type="entry name" value="EPSP_synthase"/>
</dbReference>
<dbReference type="InterPro" id="IPR023193">
    <property type="entry name" value="EPSP_synthase_CS"/>
</dbReference>
<dbReference type="InterPro" id="IPR013792">
    <property type="entry name" value="RNA3'P_cycl/enolpyr_Trfase_a/b"/>
</dbReference>
<dbReference type="NCBIfam" id="TIGR01356">
    <property type="entry name" value="aroA"/>
    <property type="match status" value="1"/>
</dbReference>
<dbReference type="PANTHER" id="PTHR21090">
    <property type="entry name" value="AROM/DEHYDROQUINATE SYNTHASE"/>
    <property type="match status" value="1"/>
</dbReference>
<dbReference type="PANTHER" id="PTHR21090:SF5">
    <property type="entry name" value="PENTAFUNCTIONAL AROM POLYPEPTIDE"/>
    <property type="match status" value="1"/>
</dbReference>
<dbReference type="Pfam" id="PF00275">
    <property type="entry name" value="EPSP_synthase"/>
    <property type="match status" value="1"/>
</dbReference>
<dbReference type="PIRSF" id="PIRSF000505">
    <property type="entry name" value="EPSPS"/>
    <property type="match status" value="1"/>
</dbReference>
<dbReference type="SUPFAM" id="SSF55205">
    <property type="entry name" value="EPT/RTPC-like"/>
    <property type="match status" value="1"/>
</dbReference>
<dbReference type="PROSITE" id="PS00104">
    <property type="entry name" value="EPSP_SYNTHASE_1"/>
    <property type="match status" value="1"/>
</dbReference>
<dbReference type="PROSITE" id="PS00885">
    <property type="entry name" value="EPSP_SYNTHASE_2"/>
    <property type="match status" value="1"/>
</dbReference>
<gene>
    <name evidence="1" type="primary">aroA</name>
    <name type="ordered locus">RPA0061</name>
</gene>